<keyword id="KW-0002">3D-structure</keyword>
<keyword id="KW-0028">Amino-acid biosynthesis</keyword>
<keyword id="KW-0057">Aromatic amino acid biosynthesis</keyword>
<keyword id="KW-0150">Chloroplast</keyword>
<keyword id="KW-0456">Lyase</keyword>
<keyword id="KW-0511">Multifunctional enzyme</keyword>
<keyword id="KW-0521">NADP</keyword>
<keyword id="KW-0560">Oxidoreductase</keyword>
<keyword id="KW-0934">Plastid</keyword>
<keyword id="KW-1185">Reference proteome</keyword>
<keyword id="KW-0809">Transit peptide</keyword>
<gene>
    <name evidence="6" type="primary">EMB3004</name>
    <name evidence="8" type="ordered locus">At3g06350</name>
    <name evidence="9" type="ORF">F24P17.18</name>
</gene>
<name>DHQSD_ARATH</name>
<organism>
    <name type="scientific">Arabidopsis thaliana</name>
    <name type="common">Mouse-ear cress</name>
    <dbReference type="NCBI Taxonomy" id="3702"/>
    <lineage>
        <taxon>Eukaryota</taxon>
        <taxon>Viridiplantae</taxon>
        <taxon>Streptophyta</taxon>
        <taxon>Embryophyta</taxon>
        <taxon>Tracheophyta</taxon>
        <taxon>Spermatophyta</taxon>
        <taxon>Magnoliopsida</taxon>
        <taxon>eudicotyledons</taxon>
        <taxon>Gunneridae</taxon>
        <taxon>Pentapetalae</taxon>
        <taxon>rosids</taxon>
        <taxon>malvids</taxon>
        <taxon>Brassicales</taxon>
        <taxon>Brassicaceae</taxon>
        <taxon>Camelineae</taxon>
        <taxon>Arabidopsis</taxon>
    </lineage>
</organism>
<comment type="function">
    <text evidence="3">Bifunctional dehydroquinate dehydratase-shikimate dehydrogenase enzyme that catalyzes two steps in the chorismate biosynthesis pathway.</text>
</comment>
<comment type="catalytic activity">
    <reaction evidence="3">
        <text>3-dehydroquinate = 3-dehydroshikimate + H2O</text>
        <dbReference type="Rhea" id="RHEA:21096"/>
        <dbReference type="ChEBI" id="CHEBI:15377"/>
        <dbReference type="ChEBI" id="CHEBI:16630"/>
        <dbReference type="ChEBI" id="CHEBI:32364"/>
        <dbReference type="EC" id="4.2.1.10"/>
    </reaction>
    <physiologicalReaction direction="left-to-right" evidence="3">
        <dbReference type="Rhea" id="RHEA:21097"/>
    </physiologicalReaction>
</comment>
<comment type="catalytic activity">
    <reaction evidence="3">
        <text>shikimate + NADP(+) = 3-dehydroshikimate + NADPH + H(+)</text>
        <dbReference type="Rhea" id="RHEA:17737"/>
        <dbReference type="ChEBI" id="CHEBI:15378"/>
        <dbReference type="ChEBI" id="CHEBI:16630"/>
        <dbReference type="ChEBI" id="CHEBI:36208"/>
        <dbReference type="ChEBI" id="CHEBI:57783"/>
        <dbReference type="ChEBI" id="CHEBI:58349"/>
        <dbReference type="EC" id="1.1.1.25"/>
    </reaction>
    <physiologicalReaction direction="right-to-left" evidence="3">
        <dbReference type="Rhea" id="RHEA:17739"/>
    </physiologicalReaction>
</comment>
<comment type="biophysicochemical properties">
    <kinetics>
        <KM evidence="3">685 uM for shikimate</KM>
        <KM evidence="3">131 uM for NADP</KM>
    </kinetics>
</comment>
<comment type="pathway">
    <text evidence="6">Metabolic intermediate biosynthesis; chorismate biosynthesis; chorismate from D-erythrose 4-phosphate and phosphoenolpyruvate: step 3/7.</text>
</comment>
<comment type="pathway">
    <text evidence="6">Metabolic intermediate biosynthesis; chorismate biosynthesis; chorismate from D-erythrose 4-phosphate and phosphoenolpyruvate: step 4/7.</text>
</comment>
<comment type="subunit">
    <text evidence="3">Monomer.</text>
</comment>
<comment type="subcellular location">
    <subcellularLocation>
        <location evidence="6">Plastid</location>
        <location evidence="6">Chloroplast</location>
    </subcellularLocation>
</comment>
<comment type="similarity">
    <text evidence="6">In the N-terminal section; belongs to the type-I 3-dehydroquinase family.</text>
</comment>
<comment type="similarity">
    <text evidence="6">In the C-terminal section; belongs to the shikimate dehydrogenase family.</text>
</comment>
<reference key="1">
    <citation type="journal article" date="2000" name="Nature">
        <title>Sequence and analysis of chromosome 3 of the plant Arabidopsis thaliana.</title>
        <authorList>
            <person name="Salanoubat M."/>
            <person name="Lemcke K."/>
            <person name="Rieger M."/>
            <person name="Ansorge W."/>
            <person name="Unseld M."/>
            <person name="Fartmann B."/>
            <person name="Valle G."/>
            <person name="Bloecker H."/>
            <person name="Perez-Alonso M."/>
            <person name="Obermaier B."/>
            <person name="Delseny M."/>
            <person name="Boutry M."/>
            <person name="Grivell L.A."/>
            <person name="Mache R."/>
            <person name="Puigdomenech P."/>
            <person name="De Simone V."/>
            <person name="Choisne N."/>
            <person name="Artiguenave F."/>
            <person name="Robert C."/>
            <person name="Brottier P."/>
            <person name="Wincker P."/>
            <person name="Cattolico L."/>
            <person name="Weissenbach J."/>
            <person name="Saurin W."/>
            <person name="Quetier F."/>
            <person name="Schaefer M."/>
            <person name="Mueller-Auer S."/>
            <person name="Gabel C."/>
            <person name="Fuchs M."/>
            <person name="Benes V."/>
            <person name="Wurmbach E."/>
            <person name="Drzonek H."/>
            <person name="Erfle H."/>
            <person name="Jordan N."/>
            <person name="Bangert S."/>
            <person name="Wiedelmann R."/>
            <person name="Kranz H."/>
            <person name="Voss H."/>
            <person name="Holland R."/>
            <person name="Brandt P."/>
            <person name="Nyakatura G."/>
            <person name="Vezzi A."/>
            <person name="D'Angelo M."/>
            <person name="Pallavicini A."/>
            <person name="Toppo S."/>
            <person name="Simionati B."/>
            <person name="Conrad A."/>
            <person name="Hornischer K."/>
            <person name="Kauer G."/>
            <person name="Loehnert T.-H."/>
            <person name="Nordsiek G."/>
            <person name="Reichelt J."/>
            <person name="Scharfe M."/>
            <person name="Schoen O."/>
            <person name="Bargues M."/>
            <person name="Terol J."/>
            <person name="Climent J."/>
            <person name="Navarro P."/>
            <person name="Collado C."/>
            <person name="Perez-Perez A."/>
            <person name="Ottenwaelder B."/>
            <person name="Duchemin D."/>
            <person name="Cooke R."/>
            <person name="Laudie M."/>
            <person name="Berger-Llauro C."/>
            <person name="Purnelle B."/>
            <person name="Masuy D."/>
            <person name="de Haan M."/>
            <person name="Maarse A.C."/>
            <person name="Alcaraz J.-P."/>
            <person name="Cottet A."/>
            <person name="Casacuberta E."/>
            <person name="Monfort A."/>
            <person name="Argiriou A."/>
            <person name="Flores M."/>
            <person name="Liguori R."/>
            <person name="Vitale D."/>
            <person name="Mannhaupt G."/>
            <person name="Haase D."/>
            <person name="Schoof H."/>
            <person name="Rudd S."/>
            <person name="Zaccaria P."/>
            <person name="Mewes H.-W."/>
            <person name="Mayer K.F.X."/>
            <person name="Kaul S."/>
            <person name="Town C.D."/>
            <person name="Koo H.L."/>
            <person name="Tallon L.J."/>
            <person name="Jenkins J."/>
            <person name="Rooney T."/>
            <person name="Rizzo M."/>
            <person name="Walts A."/>
            <person name="Utterback T."/>
            <person name="Fujii C.Y."/>
            <person name="Shea T.P."/>
            <person name="Creasy T.H."/>
            <person name="Haas B."/>
            <person name="Maiti R."/>
            <person name="Wu D."/>
            <person name="Peterson J."/>
            <person name="Van Aken S."/>
            <person name="Pai G."/>
            <person name="Militscher J."/>
            <person name="Sellers P."/>
            <person name="Gill J.E."/>
            <person name="Feldblyum T.V."/>
            <person name="Preuss D."/>
            <person name="Lin X."/>
            <person name="Nierman W.C."/>
            <person name="Salzberg S.L."/>
            <person name="White O."/>
            <person name="Venter J.C."/>
            <person name="Fraser C.M."/>
            <person name="Kaneko T."/>
            <person name="Nakamura Y."/>
            <person name="Sato S."/>
            <person name="Kato T."/>
            <person name="Asamizu E."/>
            <person name="Sasamoto S."/>
            <person name="Kimura T."/>
            <person name="Idesawa K."/>
            <person name="Kawashima K."/>
            <person name="Kishida Y."/>
            <person name="Kiyokawa C."/>
            <person name="Kohara M."/>
            <person name="Matsumoto M."/>
            <person name="Matsuno A."/>
            <person name="Muraki A."/>
            <person name="Nakayama S."/>
            <person name="Nakazaki N."/>
            <person name="Shinpo S."/>
            <person name="Takeuchi C."/>
            <person name="Wada T."/>
            <person name="Watanabe A."/>
            <person name="Yamada M."/>
            <person name="Yasuda M."/>
            <person name="Tabata S."/>
        </authorList>
    </citation>
    <scope>NUCLEOTIDE SEQUENCE [LARGE SCALE GENOMIC DNA]</scope>
    <source>
        <strain>cv. Columbia</strain>
    </source>
</reference>
<reference key="2">
    <citation type="journal article" date="2017" name="Plant J.">
        <title>Araport11: a complete reannotation of the Arabidopsis thaliana reference genome.</title>
        <authorList>
            <person name="Cheng C.Y."/>
            <person name="Krishnakumar V."/>
            <person name="Chan A.P."/>
            <person name="Thibaud-Nissen F."/>
            <person name="Schobel S."/>
            <person name="Town C.D."/>
        </authorList>
    </citation>
    <scope>GENOME REANNOTATION</scope>
    <source>
        <strain>cv. Columbia</strain>
    </source>
</reference>
<reference key="3">
    <citation type="submission" date="2004-03" db="EMBL/GenBank/DDBJ databases">
        <authorList>
            <person name="Cheuk R.F."/>
            <person name="Chen H."/>
            <person name="Kim C.J."/>
            <person name="Shinn P."/>
            <person name="Carninci P."/>
            <person name="Hayashizaki Y."/>
            <person name="Ishida J."/>
            <person name="Kamiya A."/>
            <person name="Kawai J."/>
            <person name="Narusaka M."/>
            <person name="Sakurai T."/>
            <person name="Satou M."/>
            <person name="Seki M."/>
            <person name="Shinozaki K."/>
            <person name="Ecker J.R."/>
        </authorList>
    </citation>
    <scope>NUCLEOTIDE SEQUENCE [LARGE SCALE MRNA]</scope>
    <source>
        <strain>cv. Columbia</strain>
    </source>
</reference>
<reference key="4">
    <citation type="submission" date="2004-08" db="EMBL/GenBank/DDBJ databases">
        <title>Shikimate dehydrogenase: a bi-functional enzyme with a novel role in plant and microbial secondary metabolism.</title>
        <authorList>
            <person name="Muir R.M."/>
            <person name="Ingham E."/>
            <person name="Uratsu S.L."/>
            <person name="Leslie C.A."/>
            <person name="McGranahan G.H."/>
            <person name="Dandekar A.M."/>
        </authorList>
    </citation>
    <scope>NUCLEOTIDE SEQUENCE [MRNA] OF 94-603</scope>
</reference>
<reference key="5">
    <citation type="submission" date="2005-03" db="EMBL/GenBank/DDBJ databases">
        <title>Large-scale analysis of RIKEN Arabidopsis full-length (RAFL) cDNAs.</title>
        <authorList>
            <person name="Totoki Y."/>
            <person name="Seki M."/>
            <person name="Ishida J."/>
            <person name="Nakajima M."/>
            <person name="Enju A."/>
            <person name="Kamiya A."/>
            <person name="Narusaka M."/>
            <person name="Shin-i T."/>
            <person name="Nakagawa M."/>
            <person name="Sakamoto N."/>
            <person name="Oishi K."/>
            <person name="Kohara Y."/>
            <person name="Kobayashi M."/>
            <person name="Toyoda A."/>
            <person name="Sakaki Y."/>
            <person name="Sakurai T."/>
            <person name="Iida K."/>
            <person name="Akiyama K."/>
            <person name="Satou M."/>
            <person name="Toyoda T."/>
            <person name="Konagaya A."/>
            <person name="Carninci P."/>
            <person name="Kawai J."/>
            <person name="Hayashizaki Y."/>
            <person name="Shinozaki K."/>
        </authorList>
    </citation>
    <scope>NUCLEOTIDE SEQUENCE [LARGE SCALE MRNA] OF 465-603</scope>
    <source>
        <strain>cv. Columbia</strain>
    </source>
</reference>
<reference key="6">
    <citation type="journal article" date="2006" name="Biochemistry">
        <title>Structure of Arabidopsis dehydroquinate dehydratase-shikimate dehydrogenase and implications for metabolic channeling in the shikimate pathway.</title>
        <authorList>
            <person name="Singh S.A."/>
            <person name="Christendat D."/>
        </authorList>
    </citation>
    <scope>X-RAY CRYSTALLOGRAPHY (1.95 ANGSTROMS) OF 90-603 IN COMPLEX WITH SHIKIMATE</scope>
    <scope>FUNCTION</scope>
    <scope>CATALYTIC ACTIVITY</scope>
    <scope>BIOPHYSICOCHEMICAL PROPERTIES</scope>
    <scope>ACTIVE SITE</scope>
    <scope>SUBUNIT</scope>
    <scope>MUTAGENESIS OF SER-336; SER-338; LYS-385; ASP-423 AND TYR-550</scope>
</reference>
<reference key="7">
    <citation type="journal article" date="2007" name="Cryst. Growth Des.">
        <title>The DHQ-dehydroshikimate-SDH-shikimate-NADP(H) complex: Insights into metabolite transfer in the shikimate pathway.</title>
        <authorList>
            <person name="Singh S.A."/>
            <person name="Christendat D."/>
        </authorList>
    </citation>
    <scope>X-RAY CRYSTALLOGRAPHY (1.78 ANGSTROMS) OF 90-603 IN COMPLEX WITH 3-DEHYDROSHIKIMATE AND NADP</scope>
</reference>
<reference key="8">
    <citation type="journal article" date="2018" name="Plant J.">
        <title>Structural and biochemical approaches uncover multiple evolutionary trajectories of plant quinate dehydrogenases.</title>
        <authorList>
            <person name="Gritsunov A."/>
            <person name="Peek J."/>
            <person name="Diaz Caballero J."/>
            <person name="Guttman D."/>
            <person name="Christendat D."/>
        </authorList>
    </citation>
    <scope>X-RAY CRYSTALLOGRAPHY (2.08 ANGSTROMS) OF 90-603 IN COMPLEX WITH SHIKIMATE</scope>
</reference>
<evidence type="ECO:0000255" key="1"/>
<evidence type="ECO:0000256" key="2">
    <source>
        <dbReference type="SAM" id="MobiDB-lite"/>
    </source>
</evidence>
<evidence type="ECO:0000269" key="3">
    <source>
    </source>
</evidence>
<evidence type="ECO:0000269" key="4">
    <source ref="7"/>
</evidence>
<evidence type="ECO:0000303" key="5">
    <source>
    </source>
</evidence>
<evidence type="ECO:0000305" key="6"/>
<evidence type="ECO:0000305" key="7">
    <source>
    </source>
</evidence>
<evidence type="ECO:0000312" key="8">
    <source>
        <dbReference type="Araport" id="AT3G06350"/>
    </source>
</evidence>
<evidence type="ECO:0000312" key="9">
    <source>
        <dbReference type="EMBL" id="AAF08579.1"/>
    </source>
</evidence>
<evidence type="ECO:0007744" key="10">
    <source>
        <dbReference type="PDB" id="2GPT"/>
    </source>
</evidence>
<evidence type="ECO:0007744" key="11">
    <source>
        <dbReference type="PDB" id="2O7Q"/>
    </source>
</evidence>
<evidence type="ECO:0007744" key="12">
    <source>
        <dbReference type="PDB" id="2O7S"/>
    </source>
</evidence>
<evidence type="ECO:0007829" key="13">
    <source>
        <dbReference type="PDB" id="2O7Q"/>
    </source>
</evidence>
<evidence type="ECO:0007829" key="14">
    <source>
        <dbReference type="PDB" id="2O7S"/>
    </source>
</evidence>
<accession>Q9SQT8</accession>
<accession>Q3ZLP7</accession>
<accession>Q56ZH7</accession>
<accession>Q6NLY1</accession>
<dbReference type="EC" id="4.2.1.10" evidence="3"/>
<dbReference type="EC" id="1.1.1.25" evidence="3"/>
<dbReference type="EMBL" id="AC011623">
    <property type="protein sequence ID" value="AAF08579.1"/>
    <property type="molecule type" value="Genomic_DNA"/>
</dbReference>
<dbReference type="EMBL" id="CP002686">
    <property type="protein sequence ID" value="AEE74381.1"/>
    <property type="molecule type" value="Genomic_DNA"/>
</dbReference>
<dbReference type="EMBL" id="BT012197">
    <property type="protein sequence ID" value="AAS76684.1"/>
    <property type="molecule type" value="mRNA"/>
</dbReference>
<dbReference type="EMBL" id="AY736474">
    <property type="protein sequence ID" value="AAW63134.1"/>
    <property type="molecule type" value="mRNA"/>
</dbReference>
<dbReference type="EMBL" id="AK220988">
    <property type="protein sequence ID" value="BAD94599.1"/>
    <property type="molecule type" value="mRNA"/>
</dbReference>
<dbReference type="RefSeq" id="NP_187286.1">
    <property type="nucleotide sequence ID" value="NM_111510.4"/>
</dbReference>
<dbReference type="PDB" id="2GPT">
    <property type="method" value="X-ray"/>
    <property type="resolution" value="1.95 A"/>
    <property type="chains" value="A=90-603"/>
</dbReference>
<dbReference type="PDB" id="2O7Q">
    <property type="method" value="X-ray"/>
    <property type="resolution" value="2.20 A"/>
    <property type="chains" value="A=90-603"/>
</dbReference>
<dbReference type="PDB" id="2O7S">
    <property type="method" value="X-ray"/>
    <property type="resolution" value="1.78 A"/>
    <property type="chains" value="A=90-603"/>
</dbReference>
<dbReference type="PDB" id="6BMB">
    <property type="method" value="X-ray"/>
    <property type="resolution" value="2.08 A"/>
    <property type="chains" value="A=90-603"/>
</dbReference>
<dbReference type="PDB" id="6BMQ">
    <property type="method" value="X-ray"/>
    <property type="resolution" value="2.08 A"/>
    <property type="chains" value="A=90-603"/>
</dbReference>
<dbReference type="PDBsum" id="2GPT"/>
<dbReference type="PDBsum" id="2O7Q"/>
<dbReference type="PDBsum" id="2O7S"/>
<dbReference type="PDBsum" id="6BMB"/>
<dbReference type="PDBsum" id="6BMQ"/>
<dbReference type="SMR" id="Q9SQT8"/>
<dbReference type="BioGRID" id="5144">
    <property type="interactions" value="2"/>
</dbReference>
<dbReference type="FunCoup" id="Q9SQT8">
    <property type="interactions" value="912"/>
</dbReference>
<dbReference type="STRING" id="3702.Q9SQT8"/>
<dbReference type="iPTMnet" id="Q9SQT8"/>
<dbReference type="PaxDb" id="3702-AT3G06350.1"/>
<dbReference type="ProteomicsDB" id="224103"/>
<dbReference type="EnsemblPlants" id="AT3G06350.1">
    <property type="protein sequence ID" value="AT3G06350.1"/>
    <property type="gene ID" value="AT3G06350"/>
</dbReference>
<dbReference type="GeneID" id="819809"/>
<dbReference type="Gramene" id="AT3G06350.1">
    <property type="protein sequence ID" value="AT3G06350.1"/>
    <property type="gene ID" value="AT3G06350"/>
</dbReference>
<dbReference type="KEGG" id="ath:AT3G06350"/>
<dbReference type="Araport" id="AT3G06350"/>
<dbReference type="TAIR" id="AT3G06350">
    <property type="gene designation" value="MEE32"/>
</dbReference>
<dbReference type="eggNOG" id="KOG0692">
    <property type="taxonomic scope" value="Eukaryota"/>
</dbReference>
<dbReference type="HOGENOM" id="CLU_019120_0_0_1"/>
<dbReference type="InParanoid" id="Q9SQT8"/>
<dbReference type="OMA" id="QCCDEVD"/>
<dbReference type="PhylomeDB" id="Q9SQT8"/>
<dbReference type="BioCyc" id="ARA:AT3G06350-MONOMER"/>
<dbReference type="BioCyc" id="MetaCyc:AT3G06350-MONOMER"/>
<dbReference type="BRENDA" id="1.1.1.25">
    <property type="organism ID" value="399"/>
</dbReference>
<dbReference type="BRENDA" id="4.2.1.10">
    <property type="organism ID" value="399"/>
</dbReference>
<dbReference type="SABIO-RK" id="Q9SQT8"/>
<dbReference type="UniPathway" id="UPA00053">
    <property type="reaction ID" value="UER00086"/>
</dbReference>
<dbReference type="UniPathway" id="UPA00053">
    <property type="reaction ID" value="UER00087"/>
</dbReference>
<dbReference type="EvolutionaryTrace" id="Q9SQT8"/>
<dbReference type="PRO" id="PR:Q9SQT8"/>
<dbReference type="Proteomes" id="UP000006548">
    <property type="component" value="Chromosome 3"/>
</dbReference>
<dbReference type="ExpressionAtlas" id="Q9SQT8">
    <property type="expression patterns" value="baseline and differential"/>
</dbReference>
<dbReference type="GO" id="GO:0009507">
    <property type="term" value="C:chloroplast"/>
    <property type="evidence" value="ECO:0007005"/>
    <property type="project" value="TAIR"/>
</dbReference>
<dbReference type="GO" id="GO:0009570">
    <property type="term" value="C:chloroplast stroma"/>
    <property type="evidence" value="ECO:0007005"/>
    <property type="project" value="TAIR"/>
</dbReference>
<dbReference type="GO" id="GO:0003855">
    <property type="term" value="F:3-dehydroquinate dehydratase activity"/>
    <property type="evidence" value="ECO:0007669"/>
    <property type="project" value="UniProtKB-EC"/>
</dbReference>
<dbReference type="GO" id="GO:0050661">
    <property type="term" value="F:NADP binding"/>
    <property type="evidence" value="ECO:0007669"/>
    <property type="project" value="InterPro"/>
</dbReference>
<dbReference type="GO" id="GO:0004764">
    <property type="term" value="F:shikimate 3-dehydrogenase (NADP+) activity"/>
    <property type="evidence" value="ECO:0000314"/>
    <property type="project" value="TAIR"/>
</dbReference>
<dbReference type="GO" id="GO:0008652">
    <property type="term" value="P:amino acid biosynthetic process"/>
    <property type="evidence" value="ECO:0007669"/>
    <property type="project" value="UniProtKB-KW"/>
</dbReference>
<dbReference type="GO" id="GO:0009073">
    <property type="term" value="P:aromatic amino acid family biosynthetic process"/>
    <property type="evidence" value="ECO:0007669"/>
    <property type="project" value="UniProtKB-KW"/>
</dbReference>
<dbReference type="GO" id="GO:0009423">
    <property type="term" value="P:chorismate biosynthetic process"/>
    <property type="evidence" value="ECO:0007669"/>
    <property type="project" value="UniProtKB-UniPathway"/>
</dbReference>
<dbReference type="GO" id="GO:0009793">
    <property type="term" value="P:embryo development ending in seed dormancy"/>
    <property type="evidence" value="ECO:0000315"/>
    <property type="project" value="TAIR"/>
</dbReference>
<dbReference type="GO" id="GO:0019632">
    <property type="term" value="P:shikimate metabolic process"/>
    <property type="evidence" value="ECO:0000314"/>
    <property type="project" value="TAIR"/>
</dbReference>
<dbReference type="CDD" id="cd00502">
    <property type="entry name" value="DHQase_I"/>
    <property type="match status" value="1"/>
</dbReference>
<dbReference type="CDD" id="cd01065">
    <property type="entry name" value="NAD_bind_Shikimate_DH"/>
    <property type="match status" value="1"/>
</dbReference>
<dbReference type="FunFam" id="3.40.50.10860:FF:000009">
    <property type="entry name" value="Bifunctional 3-dehydroquinate dehydratase/shikimate dehydrogenase, chloroplastic"/>
    <property type="match status" value="1"/>
</dbReference>
<dbReference type="FunFam" id="3.40.50.720:FF:000172">
    <property type="entry name" value="Bifunctional 3-dehydroquinate dehydratase/shikimate dehydrogenase, chloroplastic"/>
    <property type="match status" value="1"/>
</dbReference>
<dbReference type="FunFam" id="3.20.20.70:FF:000142">
    <property type="entry name" value="bifunctional 3-dehydroquinate dehydratase/shikimate dehydrogenase, chloroplastic"/>
    <property type="match status" value="1"/>
</dbReference>
<dbReference type="Gene3D" id="3.20.20.70">
    <property type="entry name" value="Aldolase class I"/>
    <property type="match status" value="1"/>
</dbReference>
<dbReference type="Gene3D" id="3.40.50.10860">
    <property type="entry name" value="Leucine Dehydrogenase, chain A, domain 1"/>
    <property type="match status" value="1"/>
</dbReference>
<dbReference type="Gene3D" id="3.40.50.720">
    <property type="entry name" value="NAD(P)-binding Rossmann-like Domain"/>
    <property type="match status" value="1"/>
</dbReference>
<dbReference type="HAMAP" id="MF_00214">
    <property type="entry name" value="AroD"/>
    <property type="match status" value="1"/>
</dbReference>
<dbReference type="HAMAP" id="MF_00222">
    <property type="entry name" value="Shikimate_DH_AroE"/>
    <property type="match status" value="1"/>
</dbReference>
<dbReference type="InterPro" id="IPR013785">
    <property type="entry name" value="Aldolase_TIM"/>
</dbReference>
<dbReference type="InterPro" id="IPR046346">
    <property type="entry name" value="Aminoacid_DH-like_N_sf"/>
</dbReference>
<dbReference type="InterPro" id="IPR001381">
    <property type="entry name" value="DHquinase_I"/>
</dbReference>
<dbReference type="InterPro" id="IPR036291">
    <property type="entry name" value="NAD(P)-bd_dom_sf"/>
</dbReference>
<dbReference type="InterPro" id="IPR041121">
    <property type="entry name" value="SDH_C"/>
</dbReference>
<dbReference type="InterPro" id="IPR011342">
    <property type="entry name" value="Shikimate_DH"/>
</dbReference>
<dbReference type="InterPro" id="IPR013708">
    <property type="entry name" value="Shikimate_DH-bd_N"/>
</dbReference>
<dbReference type="InterPro" id="IPR022893">
    <property type="entry name" value="Shikimate_DH_fam"/>
</dbReference>
<dbReference type="InterPro" id="IPR006151">
    <property type="entry name" value="Shikm_DH/Glu-tRNA_Rdtase"/>
</dbReference>
<dbReference type="NCBIfam" id="TIGR01093">
    <property type="entry name" value="aroD"/>
    <property type="match status" value="1"/>
</dbReference>
<dbReference type="NCBIfam" id="TIGR00507">
    <property type="entry name" value="aroE"/>
    <property type="match status" value="1"/>
</dbReference>
<dbReference type="PANTHER" id="PTHR21089:SF1">
    <property type="entry name" value="BIFUNCTIONAL 3-DEHYDROQUINATE DEHYDRATASE_SHIKIMATE DEHYDROGENASE, CHLOROPLASTIC"/>
    <property type="match status" value="1"/>
</dbReference>
<dbReference type="PANTHER" id="PTHR21089">
    <property type="entry name" value="SHIKIMATE DEHYDROGENASE"/>
    <property type="match status" value="1"/>
</dbReference>
<dbReference type="Pfam" id="PF01487">
    <property type="entry name" value="DHquinase_I"/>
    <property type="match status" value="1"/>
</dbReference>
<dbReference type="Pfam" id="PF18317">
    <property type="entry name" value="SDH_C"/>
    <property type="match status" value="1"/>
</dbReference>
<dbReference type="Pfam" id="PF01488">
    <property type="entry name" value="Shikimate_DH"/>
    <property type="match status" value="1"/>
</dbReference>
<dbReference type="Pfam" id="PF08501">
    <property type="entry name" value="Shikimate_dh_N"/>
    <property type="match status" value="1"/>
</dbReference>
<dbReference type="SUPFAM" id="SSF51569">
    <property type="entry name" value="Aldolase"/>
    <property type="match status" value="1"/>
</dbReference>
<dbReference type="SUPFAM" id="SSF53223">
    <property type="entry name" value="Aminoacid dehydrogenase-like, N-terminal domain"/>
    <property type="match status" value="1"/>
</dbReference>
<dbReference type="SUPFAM" id="SSF51735">
    <property type="entry name" value="NAD(P)-binding Rossmann-fold domains"/>
    <property type="match status" value="1"/>
</dbReference>
<feature type="transit peptide" description="Chloroplast" evidence="1">
    <location>
        <begin position="1"/>
        <end position="66"/>
    </location>
</feature>
<feature type="chain" id="PRO_0000250645" description="Bifunctional 3-dehydroquinate dehydratase/shikimate dehydrogenase, chloroplastic">
    <location>
        <begin position="67"/>
        <end position="603"/>
    </location>
</feature>
<feature type="region of interest" description="Disordered" evidence="2">
    <location>
        <begin position="1"/>
        <end position="22"/>
    </location>
</feature>
<feature type="region of interest" description="3-dehydroquinate dehydratase">
    <location>
        <begin position="96"/>
        <end position="313"/>
    </location>
</feature>
<feature type="region of interest" description="Shikimate dehydrogenase">
    <location>
        <begin position="328"/>
        <end position="558"/>
    </location>
</feature>
<feature type="compositionally biased region" description="Polar residues" evidence="2">
    <location>
        <begin position="1"/>
        <end position="10"/>
    </location>
</feature>
<feature type="compositionally biased region" description="Low complexity" evidence="2">
    <location>
        <begin position="13"/>
        <end position="22"/>
    </location>
</feature>
<feature type="active site" description="Proton acceptor; for 3-dehydroquinate dehydratase activity" evidence="7">
    <location>
        <position position="214"/>
    </location>
</feature>
<feature type="active site" description="Schiff-base intermediate with substrate; for 3-dehydroquinate dehydratase activity" evidence="7">
    <location>
        <position position="241"/>
    </location>
</feature>
<feature type="active site" description="For shikimate dehydrogenase activity" evidence="7">
    <location>
        <position position="385"/>
    </location>
</feature>
<feature type="active site" description="For shikimate dehydrogenase activity" evidence="7">
    <location>
        <position position="423"/>
    </location>
</feature>
<feature type="binding site" evidence="4 11">
    <location>
        <position position="124"/>
    </location>
    <ligand>
        <name>3-dehydroshikimate</name>
        <dbReference type="ChEBI" id="CHEBI:16630"/>
    </ligand>
</feature>
<feature type="binding site" evidence="4 11">
    <location>
        <position position="126"/>
    </location>
    <ligand>
        <name>3-dehydroshikimate</name>
        <dbReference type="ChEBI" id="CHEBI:16630"/>
    </ligand>
</feature>
<feature type="binding site" evidence="4 11">
    <location>
        <position position="155"/>
    </location>
    <ligand>
        <name>3-dehydroshikimate</name>
        <dbReference type="ChEBI" id="CHEBI:16630"/>
    </ligand>
</feature>
<feature type="binding site" evidence="4 11">
    <location>
        <position position="241"/>
    </location>
    <ligand>
        <name>3-dehydroshikimate</name>
        <dbReference type="ChEBI" id="CHEBI:16630"/>
    </ligand>
</feature>
<feature type="binding site" evidence="4 11">
    <location>
        <position position="279"/>
    </location>
    <ligand>
        <name>3-dehydroshikimate</name>
        <dbReference type="ChEBI" id="CHEBI:16630"/>
    </ligand>
</feature>
<feature type="binding site" evidence="4 11">
    <location>
        <position position="300"/>
    </location>
    <ligand>
        <name>3-dehydroshikimate</name>
        <dbReference type="ChEBI" id="CHEBI:16630"/>
    </ligand>
</feature>
<feature type="binding site" evidence="4 11">
    <location>
        <position position="304"/>
    </location>
    <ligand>
        <name>3-dehydroshikimate</name>
        <dbReference type="ChEBI" id="CHEBI:16630"/>
    </ligand>
</feature>
<feature type="binding site" evidence="3 10">
    <location>
        <position position="336"/>
    </location>
    <ligand>
        <name>shikimate</name>
        <dbReference type="ChEBI" id="CHEBI:36208"/>
    </ligand>
</feature>
<feature type="binding site" evidence="3 10">
    <location>
        <position position="338"/>
    </location>
    <ligand>
        <name>shikimate</name>
        <dbReference type="ChEBI" id="CHEBI:36208"/>
    </ligand>
</feature>
<feature type="binding site" evidence="3 10">
    <location>
        <position position="381"/>
    </location>
    <ligand>
        <name>shikimate</name>
        <dbReference type="ChEBI" id="CHEBI:36208"/>
    </ligand>
</feature>
<feature type="binding site" evidence="3 10">
    <location>
        <position position="385"/>
    </location>
    <ligand>
        <name>shikimate</name>
        <dbReference type="ChEBI" id="CHEBI:36208"/>
    </ligand>
</feature>
<feature type="binding site" evidence="3 10">
    <location>
        <position position="406"/>
    </location>
    <ligand>
        <name>shikimate</name>
        <dbReference type="ChEBI" id="CHEBI:36208"/>
    </ligand>
</feature>
<feature type="binding site" evidence="3 10">
    <location>
        <position position="423"/>
    </location>
    <ligand>
        <name>shikimate</name>
        <dbReference type="ChEBI" id="CHEBI:36208"/>
    </ligand>
</feature>
<feature type="binding site" evidence="4 12">
    <location>
        <position position="461"/>
    </location>
    <ligand>
        <name>NADP(+)</name>
        <dbReference type="ChEBI" id="CHEBI:58349"/>
    </ligand>
</feature>
<feature type="binding site" evidence="4 12">
    <location>
        <position position="463"/>
    </location>
    <ligand>
        <name>NADP(+)</name>
        <dbReference type="ChEBI" id="CHEBI:58349"/>
    </ligand>
</feature>
<feature type="binding site" evidence="4 12">
    <location>
        <position position="464"/>
    </location>
    <ligand>
        <name>NADP(+)</name>
        <dbReference type="ChEBI" id="CHEBI:58349"/>
    </ligand>
</feature>
<feature type="binding site" evidence="4 12">
    <location>
        <position position="483"/>
    </location>
    <ligand>
        <name>NADP(+)</name>
        <dbReference type="ChEBI" id="CHEBI:58349"/>
    </ligand>
</feature>
<feature type="binding site" evidence="4 12">
    <location>
        <position position="485"/>
    </location>
    <ligand>
        <name>NADP(+)</name>
        <dbReference type="ChEBI" id="CHEBI:58349"/>
    </ligand>
</feature>
<feature type="binding site" evidence="4 12">
    <location>
        <position position="488"/>
    </location>
    <ligand>
        <name>NADP(+)</name>
        <dbReference type="ChEBI" id="CHEBI:58349"/>
    </ligand>
</feature>
<feature type="binding site" evidence="4 12">
    <location>
        <position position="525"/>
    </location>
    <ligand>
        <name>NADP(+)</name>
        <dbReference type="ChEBI" id="CHEBI:58349"/>
    </ligand>
</feature>
<feature type="binding site" evidence="4 12">
    <location>
        <position position="548"/>
    </location>
    <ligand>
        <name>NADP(+)</name>
        <dbReference type="ChEBI" id="CHEBI:58349"/>
    </ligand>
</feature>
<feature type="binding site" evidence="3 10">
    <location>
        <position position="550"/>
    </location>
    <ligand>
        <name>shikimate</name>
        <dbReference type="ChEBI" id="CHEBI:36208"/>
    </ligand>
</feature>
<feature type="binding site" evidence="4 12">
    <location>
        <position position="571"/>
    </location>
    <ligand>
        <name>NADP(+)</name>
        <dbReference type="ChEBI" id="CHEBI:58349"/>
    </ligand>
</feature>
<feature type="binding site" evidence="3 10">
    <location>
        <position position="578"/>
    </location>
    <ligand>
        <name>shikimate</name>
        <dbReference type="ChEBI" id="CHEBI:36208"/>
    </ligand>
</feature>
<feature type="binding site" evidence="3 10">
    <location>
        <position position="582"/>
    </location>
    <ligand>
        <name>shikimate</name>
        <dbReference type="ChEBI" id="CHEBI:36208"/>
    </ligand>
</feature>
<feature type="mutagenesis site" description="13-fold decrease in substrate affinity but almost no change in activity." evidence="3">
    <original>S</original>
    <variation>A</variation>
    <location>
        <position position="336"/>
    </location>
</feature>
<feature type="mutagenesis site" description="10-fold decrease in activity, and 9-fold decrease in substrate affinity." evidence="3">
    <original>S</original>
    <variation>A</variation>
    <location>
        <position position="338"/>
    </location>
</feature>
<feature type="mutagenesis site" description="Strongly reduced shikimate dehydrogenase activity, but minor change in substrate affinity." evidence="3">
    <original>K</original>
    <variation>A</variation>
    <location>
        <position position="385"/>
    </location>
</feature>
<feature type="mutagenesis site" description="Strongly reduced shikimate dehydrogenase activity, but no change in substrate affinity." evidence="3">
    <original>K</original>
    <variation>N</variation>
    <location>
        <position position="385"/>
    </location>
</feature>
<feature type="mutagenesis site" description="Loss of shikimate dehydrogenase activity." evidence="3">
    <original>D</original>
    <variation>A</variation>
    <location>
        <position position="423"/>
    </location>
</feature>
<feature type="mutagenesis site" description="Reduced shikimate dehydrogenase activity, but no change in substrate affinity." evidence="3">
    <original>D</original>
    <variation>N</variation>
    <location>
        <position position="423"/>
    </location>
</feature>
<feature type="mutagenesis site" description="100-fold decrease in activity, and 2-fold decrease in substrate affinity." evidence="3">
    <original>Y</original>
    <variation>F</variation>
    <variation>A</variation>
    <location>
        <position position="550"/>
    </location>
</feature>
<feature type="sequence conflict" description="In Ref. 5; BAD94599." evidence="6" ref="5">
    <original>E</original>
    <variation>K</variation>
    <location>
        <position position="491"/>
    </location>
</feature>
<feature type="sequence conflict" description="In Ref. 3; AAS76684." evidence="6" ref="3">
    <original>L</original>
    <variation>Q</variation>
    <location>
        <position position="557"/>
    </location>
</feature>
<feature type="strand" evidence="14">
    <location>
        <begin position="95"/>
        <end position="100"/>
    </location>
</feature>
<feature type="helix" evidence="14">
    <location>
        <begin position="105"/>
        <end position="118"/>
    </location>
</feature>
<feature type="strand" evidence="14">
    <location>
        <begin position="121"/>
        <end position="126"/>
    </location>
</feature>
<feature type="helix" evidence="14">
    <location>
        <begin position="127"/>
        <end position="129"/>
    </location>
</feature>
<feature type="helix" evidence="14">
    <location>
        <begin position="135"/>
        <end position="145"/>
    </location>
</feature>
<feature type="strand" evidence="14">
    <location>
        <begin position="150"/>
        <end position="153"/>
    </location>
</feature>
<feature type="helix" evidence="14">
    <location>
        <begin position="157"/>
        <end position="159"/>
    </location>
</feature>
<feature type="strand" evidence="14">
    <location>
        <begin position="161"/>
        <end position="163"/>
    </location>
</feature>
<feature type="helix" evidence="14">
    <location>
        <begin position="167"/>
        <end position="180"/>
    </location>
</feature>
<feature type="strand" evidence="14">
    <location>
        <begin position="183"/>
        <end position="188"/>
    </location>
</feature>
<feature type="helix" evidence="14">
    <location>
        <begin position="189"/>
        <end position="198"/>
    </location>
</feature>
<feature type="turn" evidence="14">
    <location>
        <begin position="199"/>
        <end position="201"/>
    </location>
</feature>
<feature type="strand" evidence="14">
    <location>
        <begin position="208"/>
        <end position="214"/>
    </location>
</feature>
<feature type="helix" evidence="14">
    <location>
        <begin position="222"/>
        <end position="233"/>
    </location>
</feature>
<feature type="turn" evidence="14">
    <location>
        <begin position="234"/>
        <end position="236"/>
    </location>
</feature>
<feature type="strand" evidence="14">
    <location>
        <begin position="238"/>
        <end position="245"/>
    </location>
</feature>
<feature type="helix" evidence="14">
    <location>
        <begin position="249"/>
        <end position="251"/>
    </location>
</feature>
<feature type="helix" evidence="14">
    <location>
        <begin position="252"/>
        <end position="261"/>
    </location>
</feature>
<feature type="strand" evidence="14">
    <location>
        <begin position="266"/>
        <end position="272"/>
    </location>
</feature>
<feature type="helix" evidence="14">
    <location>
        <begin position="273"/>
        <end position="276"/>
    </location>
</feature>
<feature type="helix" evidence="14">
    <location>
        <begin position="277"/>
        <end position="280"/>
    </location>
</feature>
<feature type="turn" evidence="14">
    <location>
        <begin position="282"/>
        <end position="286"/>
    </location>
</feature>
<feature type="strand" evidence="14">
    <location>
        <begin position="288"/>
        <end position="291"/>
    </location>
</feature>
<feature type="strand" evidence="14">
    <location>
        <begin position="293"/>
        <end position="295"/>
    </location>
</feature>
<feature type="helix" evidence="14">
    <location>
        <begin position="307"/>
        <end position="312"/>
    </location>
</feature>
<feature type="helix" evidence="14">
    <location>
        <begin position="316"/>
        <end position="318"/>
    </location>
</feature>
<feature type="strand" evidence="14">
    <location>
        <begin position="324"/>
        <end position="332"/>
    </location>
</feature>
<feature type="helix" evidence="14">
    <location>
        <begin position="338"/>
        <end position="348"/>
    </location>
</feature>
<feature type="strand" evidence="14">
    <location>
        <begin position="352"/>
        <end position="359"/>
    </location>
</feature>
<feature type="helix" evidence="14">
    <location>
        <begin position="363"/>
        <end position="369"/>
    </location>
</feature>
<feature type="strand" evidence="14">
    <location>
        <begin position="375"/>
        <end position="380"/>
    </location>
</feature>
<feature type="helix" evidence="14">
    <location>
        <begin position="385"/>
        <end position="391"/>
    </location>
</feature>
<feature type="strand" evidence="14">
    <location>
        <begin position="393"/>
        <end position="395"/>
    </location>
</feature>
<feature type="helix" evidence="14">
    <location>
        <begin position="397"/>
        <end position="402"/>
    </location>
</feature>
<feature type="strand" evidence="14">
    <location>
        <begin position="406"/>
        <end position="410"/>
    </location>
</feature>
<feature type="turn" evidence="14">
    <location>
        <begin position="412"/>
        <end position="414"/>
    </location>
</feature>
<feature type="strand" evidence="14">
    <location>
        <begin position="417"/>
        <end position="420"/>
    </location>
</feature>
<feature type="helix" evidence="14">
    <location>
        <begin position="423"/>
        <end position="434"/>
    </location>
</feature>
<feature type="strand" evidence="14">
    <location>
        <begin position="456"/>
        <end position="459"/>
    </location>
</feature>
<feature type="helix" evidence="14">
    <location>
        <begin position="463"/>
        <end position="475"/>
    </location>
</feature>
<feature type="strand" evidence="14">
    <location>
        <begin position="480"/>
        <end position="485"/>
    </location>
</feature>
<feature type="helix" evidence="14">
    <location>
        <begin position="486"/>
        <end position="495"/>
    </location>
</feature>
<feature type="strand" evidence="13">
    <location>
        <begin position="499"/>
        <end position="502"/>
    </location>
</feature>
<feature type="turn" evidence="14">
    <location>
        <begin position="503"/>
        <end position="508"/>
    </location>
</feature>
<feature type="strand" evidence="14">
    <location>
        <begin position="514"/>
        <end position="519"/>
    </location>
</feature>
<feature type="turn" evidence="14">
    <location>
        <begin position="536"/>
        <end position="538"/>
    </location>
</feature>
<feature type="helix" evidence="14">
    <location>
        <begin position="539"/>
        <end position="541"/>
    </location>
</feature>
<feature type="strand" evidence="14">
    <location>
        <begin position="542"/>
        <end position="547"/>
    </location>
</feature>
<feature type="strand" evidence="14">
    <location>
        <begin position="551"/>
        <end position="554"/>
    </location>
</feature>
<feature type="helix" evidence="14">
    <location>
        <begin position="556"/>
        <end position="562"/>
    </location>
</feature>
<feature type="turn" evidence="14">
    <location>
        <begin position="563"/>
        <end position="565"/>
    </location>
</feature>
<feature type="strand" evidence="14">
    <location>
        <begin position="567"/>
        <end position="569"/>
    </location>
</feature>
<feature type="helix" evidence="14">
    <location>
        <begin position="571"/>
        <end position="587"/>
    </location>
</feature>
<feature type="helix" evidence="14">
    <location>
        <begin position="593"/>
        <end position="603"/>
    </location>
</feature>
<protein>
    <recommendedName>
        <fullName evidence="5">Bifunctional 3-dehydroquinate dehydratase/shikimate dehydrogenase, chloroplastic</fullName>
        <shortName evidence="5">DHQ-SDH protein</shortName>
    </recommendedName>
    <alternativeName>
        <fullName evidence="6">DHQase-SORase</fullName>
    </alternativeName>
    <alternativeName>
        <fullName evidence="6">Protein EMBRYO DEFECTIVE 3004</fullName>
    </alternativeName>
    <domain>
        <recommendedName>
            <fullName evidence="5">Dehydroquinate dehydratase</fullName>
            <shortName evidence="5">DHQ</shortName>
            <ecNumber evidence="3">4.2.1.10</ecNumber>
        </recommendedName>
    </domain>
    <domain>
        <recommendedName>
            <fullName evidence="5">Shikimate dehydrogenase</fullName>
            <shortName evidence="5">SDH</shortName>
            <ecNumber evidence="3">1.1.1.25</ecNumber>
        </recommendedName>
    </domain>
</protein>
<proteinExistence type="evidence at protein level"/>
<sequence>MAASSTNARLTNPPRLLSKPRLSPTSVANLRFPAADFSTRFFADSSSPRLRSVPFPVVFSDQRRRRSMEPSNVYVASNSTEMEIGSHDIVKNPSLICAPVMADSIDKMVIETSKAHELGADLVEIRLDWLKDFNPLEDLKTIIKKSPLPTLFTYRPKWEGGQYEGDENERRDVLRLAMELGADYIDVELQVASEFIKSIDGKKPGKFKVIVSSHNYQNTPSVEDLDGLVARIQQTGADIVKIATTAVDIADVARMFHITSKAQVPTIGLVMGERGLMSRILCSKFGGYLTFGTLDSSKVSAPGQPTIKDLLDLYNFRRIGPDTKVYGIIGKPVSHSKSPIVHNQAFKSVDFNGVYVHLLVDNLVSFLQAYSSSDFAGFSCTIPHKEAALQCCDEVDPLAKSIGAVNTILRRKSDGKLLGYNTDCIGSISAIEDGLRSSGDPSSVPSSSSPLASKTVVVIGAGGAGKALAYGAKEKGAKVVIANRTYERALELAEAIGGKALSLTDLDNYHPEDGMVLANTTSMGMQPNVEETPISKDALKHYALVFDAVYTPRITRLLREAEESGAITVSGSEMFVRQAYEQFEIFTGLPAPKELYWQIMSKY</sequence>